<sequence length="192" mass="20945">MPSLLLASSSPYRRELLARLRLPFACESPDIDESHRPGETPHDLVQRLAREKAEALASEYPGHLIIGSDQVAVLDGQILGKPHTFERAREQLTAASDTRVTFLTGLALLNSSTGECQVDCVPFTVHMRELDQASIERYLRAETPYDCAGSFKAEGLGVSLFRSTQGADATSLIGLPLIRLVDMLIKEGVSVP</sequence>
<name>NTPPB_PSESM</name>
<protein>
    <recommendedName>
        <fullName evidence="1">7-methyl-GTP pyrophosphatase</fullName>
        <shortName evidence="1">m(7)GTP pyrophosphatase</shortName>
        <ecNumber evidence="1">3.6.1.-</ecNumber>
    </recommendedName>
</protein>
<gene>
    <name type="primary">maf-1</name>
    <name type="ordered locus">PSPTO_3837</name>
</gene>
<proteinExistence type="inferred from homology"/>
<comment type="function">
    <text evidence="1">Nucleoside triphosphate pyrophosphatase that hydrolyzes 7-methyl-GTP (m(7)GTP). May have a dual role in cell division arrest and in preventing the incorporation of modified nucleotides into cellular nucleic acids.</text>
</comment>
<comment type="catalytic activity">
    <reaction evidence="1">
        <text>N(7)-methyl-GTP + H2O = N(7)-methyl-GMP + diphosphate + H(+)</text>
        <dbReference type="Rhea" id="RHEA:58744"/>
        <dbReference type="ChEBI" id="CHEBI:15377"/>
        <dbReference type="ChEBI" id="CHEBI:15378"/>
        <dbReference type="ChEBI" id="CHEBI:33019"/>
        <dbReference type="ChEBI" id="CHEBI:58285"/>
        <dbReference type="ChEBI" id="CHEBI:87133"/>
    </reaction>
</comment>
<comment type="cofactor">
    <cofactor evidence="1">
        <name>a divalent metal cation</name>
        <dbReference type="ChEBI" id="CHEBI:60240"/>
    </cofactor>
</comment>
<comment type="subcellular location">
    <subcellularLocation>
        <location evidence="1">Cytoplasm</location>
    </subcellularLocation>
</comment>
<comment type="similarity">
    <text evidence="1">Belongs to the Maf family. YceF subfamily.</text>
</comment>
<evidence type="ECO:0000255" key="1">
    <source>
        <dbReference type="HAMAP-Rule" id="MF_00528"/>
    </source>
</evidence>
<dbReference type="EC" id="3.6.1.-" evidence="1"/>
<dbReference type="EMBL" id="AE016853">
    <property type="protein sequence ID" value="AAO57305.1"/>
    <property type="molecule type" value="Genomic_DNA"/>
</dbReference>
<dbReference type="RefSeq" id="NP_793610.1">
    <property type="nucleotide sequence ID" value="NC_004578.1"/>
</dbReference>
<dbReference type="RefSeq" id="WP_011104746.1">
    <property type="nucleotide sequence ID" value="NC_004578.1"/>
</dbReference>
<dbReference type="SMR" id="Q87YG2"/>
<dbReference type="STRING" id="223283.PSPTO_3837"/>
<dbReference type="GeneID" id="1185508"/>
<dbReference type="KEGG" id="pst:PSPTO_3837"/>
<dbReference type="PATRIC" id="fig|223283.9.peg.3934"/>
<dbReference type="eggNOG" id="COG0424">
    <property type="taxonomic scope" value="Bacteria"/>
</dbReference>
<dbReference type="HOGENOM" id="CLU_040416_1_0_6"/>
<dbReference type="OrthoDB" id="9813694at2"/>
<dbReference type="PhylomeDB" id="Q87YG2"/>
<dbReference type="Proteomes" id="UP000002515">
    <property type="component" value="Chromosome"/>
</dbReference>
<dbReference type="GO" id="GO:0005737">
    <property type="term" value="C:cytoplasm"/>
    <property type="evidence" value="ECO:0007669"/>
    <property type="project" value="UniProtKB-SubCell"/>
</dbReference>
<dbReference type="GO" id="GO:0047429">
    <property type="term" value="F:nucleoside triphosphate diphosphatase activity"/>
    <property type="evidence" value="ECO:0007669"/>
    <property type="project" value="InterPro"/>
</dbReference>
<dbReference type="GO" id="GO:0009117">
    <property type="term" value="P:nucleotide metabolic process"/>
    <property type="evidence" value="ECO:0007669"/>
    <property type="project" value="UniProtKB-KW"/>
</dbReference>
<dbReference type="CDD" id="cd00555">
    <property type="entry name" value="Maf"/>
    <property type="match status" value="1"/>
</dbReference>
<dbReference type="FunFam" id="3.90.950.10:FF:000005">
    <property type="entry name" value="7-methyl-GTP pyrophosphatase"/>
    <property type="match status" value="1"/>
</dbReference>
<dbReference type="Gene3D" id="3.90.950.10">
    <property type="match status" value="1"/>
</dbReference>
<dbReference type="HAMAP" id="MF_00528">
    <property type="entry name" value="Maf"/>
    <property type="match status" value="1"/>
</dbReference>
<dbReference type="InterPro" id="IPR029001">
    <property type="entry name" value="ITPase-like_fam"/>
</dbReference>
<dbReference type="InterPro" id="IPR003697">
    <property type="entry name" value="Maf-like"/>
</dbReference>
<dbReference type="NCBIfam" id="TIGR00172">
    <property type="entry name" value="maf"/>
    <property type="match status" value="1"/>
</dbReference>
<dbReference type="PANTHER" id="PTHR43213:SF10">
    <property type="entry name" value="7-METHYL-GTP PYROPHOSPHATASE"/>
    <property type="match status" value="1"/>
</dbReference>
<dbReference type="PANTHER" id="PTHR43213">
    <property type="entry name" value="BIFUNCTIONAL DTTP/UTP PYROPHOSPHATASE/METHYLTRANSFERASE PROTEIN-RELATED"/>
    <property type="match status" value="1"/>
</dbReference>
<dbReference type="Pfam" id="PF02545">
    <property type="entry name" value="Maf"/>
    <property type="match status" value="1"/>
</dbReference>
<dbReference type="PIRSF" id="PIRSF006305">
    <property type="entry name" value="Maf"/>
    <property type="match status" value="1"/>
</dbReference>
<dbReference type="SUPFAM" id="SSF52972">
    <property type="entry name" value="ITPase-like"/>
    <property type="match status" value="1"/>
</dbReference>
<feature type="chain" id="PRO_0000123048" description="7-methyl-GTP pyrophosphatase">
    <location>
        <begin position="1"/>
        <end position="192"/>
    </location>
</feature>
<feature type="active site" description="Proton acceptor" evidence="1">
    <location>
        <position position="69"/>
    </location>
</feature>
<feature type="site" description="Important for substrate specificity" evidence="1">
    <location>
        <position position="12"/>
    </location>
</feature>
<feature type="site" description="Important for substrate specificity" evidence="1">
    <location>
        <position position="70"/>
    </location>
</feature>
<feature type="site" description="Important for substrate specificity" evidence="1">
    <location>
        <position position="154"/>
    </location>
</feature>
<accession>Q87YG2</accession>
<reference key="1">
    <citation type="journal article" date="2003" name="Proc. Natl. Acad. Sci. U.S.A.">
        <title>The complete genome sequence of the Arabidopsis and tomato pathogen Pseudomonas syringae pv. tomato DC3000.</title>
        <authorList>
            <person name="Buell C.R."/>
            <person name="Joardar V."/>
            <person name="Lindeberg M."/>
            <person name="Selengut J."/>
            <person name="Paulsen I.T."/>
            <person name="Gwinn M.L."/>
            <person name="Dodson R.J."/>
            <person name="DeBoy R.T."/>
            <person name="Durkin A.S."/>
            <person name="Kolonay J.F."/>
            <person name="Madupu R."/>
            <person name="Daugherty S.C."/>
            <person name="Brinkac L.M."/>
            <person name="Beanan M.J."/>
            <person name="Haft D.H."/>
            <person name="Nelson W.C."/>
            <person name="Davidsen T.M."/>
            <person name="Zafar N."/>
            <person name="Zhou L."/>
            <person name="Liu J."/>
            <person name="Yuan Q."/>
            <person name="Khouri H.M."/>
            <person name="Fedorova N.B."/>
            <person name="Tran B."/>
            <person name="Russell D."/>
            <person name="Berry K.J."/>
            <person name="Utterback T.R."/>
            <person name="Van Aken S.E."/>
            <person name="Feldblyum T.V."/>
            <person name="D'Ascenzo M."/>
            <person name="Deng W.-L."/>
            <person name="Ramos A.R."/>
            <person name="Alfano J.R."/>
            <person name="Cartinhour S."/>
            <person name="Chatterjee A.K."/>
            <person name="Delaney T.P."/>
            <person name="Lazarowitz S.G."/>
            <person name="Martin G.B."/>
            <person name="Schneider D.J."/>
            <person name="Tang X."/>
            <person name="Bender C.L."/>
            <person name="White O."/>
            <person name="Fraser C.M."/>
            <person name="Collmer A."/>
        </authorList>
    </citation>
    <scope>NUCLEOTIDE SEQUENCE [LARGE SCALE GENOMIC DNA]</scope>
    <source>
        <strain>ATCC BAA-871 / DC3000</strain>
    </source>
</reference>
<organism>
    <name type="scientific">Pseudomonas syringae pv. tomato (strain ATCC BAA-871 / DC3000)</name>
    <dbReference type="NCBI Taxonomy" id="223283"/>
    <lineage>
        <taxon>Bacteria</taxon>
        <taxon>Pseudomonadati</taxon>
        <taxon>Pseudomonadota</taxon>
        <taxon>Gammaproteobacteria</taxon>
        <taxon>Pseudomonadales</taxon>
        <taxon>Pseudomonadaceae</taxon>
        <taxon>Pseudomonas</taxon>
    </lineage>
</organism>
<keyword id="KW-0963">Cytoplasm</keyword>
<keyword id="KW-0378">Hydrolase</keyword>
<keyword id="KW-0546">Nucleotide metabolism</keyword>
<keyword id="KW-1185">Reference proteome</keyword>